<comment type="function">
    <text evidence="2">GTP hydrolase that promotes the GTP-dependent binding of aminoacyl-tRNA to the A-site of ribosomes during protein biosynthesis.</text>
</comment>
<comment type="catalytic activity">
    <reaction evidence="2">
        <text>GTP + H2O = GDP + phosphate + H(+)</text>
        <dbReference type="Rhea" id="RHEA:19669"/>
        <dbReference type="ChEBI" id="CHEBI:15377"/>
        <dbReference type="ChEBI" id="CHEBI:15378"/>
        <dbReference type="ChEBI" id="CHEBI:37565"/>
        <dbReference type="ChEBI" id="CHEBI:43474"/>
        <dbReference type="ChEBI" id="CHEBI:58189"/>
        <dbReference type="EC" id="3.6.5.3"/>
    </reaction>
    <physiologicalReaction direction="left-to-right" evidence="2">
        <dbReference type="Rhea" id="RHEA:19670"/>
    </physiologicalReaction>
</comment>
<comment type="subunit">
    <text evidence="2">Monomer.</text>
</comment>
<comment type="subcellular location">
    <subcellularLocation>
        <location evidence="2">Cytoplasm</location>
    </subcellularLocation>
</comment>
<comment type="similarity">
    <text evidence="2">Belongs to the TRAFAC class translation factor GTPase superfamily. Classic translation factor GTPase family. EF-Tu/EF-1A subfamily.</text>
</comment>
<gene>
    <name evidence="2" type="primary">tuf</name>
    <name type="synonym">tufA</name>
    <name type="ordered locus">spyM18_0678</name>
</gene>
<dbReference type="EC" id="3.6.5.3" evidence="2"/>
<dbReference type="EMBL" id="AE009949">
    <property type="protein sequence ID" value="AAL97354.1"/>
    <property type="molecule type" value="Genomic_DNA"/>
</dbReference>
<dbReference type="RefSeq" id="WP_003054233.1">
    <property type="nucleotide sequence ID" value="NC_003485.1"/>
</dbReference>
<dbReference type="SMR" id="Q8P1W4"/>
<dbReference type="GeneID" id="83691153"/>
<dbReference type="KEGG" id="spm:spyM18_0678"/>
<dbReference type="HOGENOM" id="CLU_007265_0_1_9"/>
<dbReference type="GO" id="GO:0005829">
    <property type="term" value="C:cytosol"/>
    <property type="evidence" value="ECO:0007669"/>
    <property type="project" value="TreeGrafter"/>
</dbReference>
<dbReference type="GO" id="GO:0005525">
    <property type="term" value="F:GTP binding"/>
    <property type="evidence" value="ECO:0007669"/>
    <property type="project" value="UniProtKB-UniRule"/>
</dbReference>
<dbReference type="GO" id="GO:0003924">
    <property type="term" value="F:GTPase activity"/>
    <property type="evidence" value="ECO:0007669"/>
    <property type="project" value="InterPro"/>
</dbReference>
<dbReference type="GO" id="GO:0003746">
    <property type="term" value="F:translation elongation factor activity"/>
    <property type="evidence" value="ECO:0007669"/>
    <property type="project" value="UniProtKB-UniRule"/>
</dbReference>
<dbReference type="CDD" id="cd01884">
    <property type="entry name" value="EF_Tu"/>
    <property type="match status" value="1"/>
</dbReference>
<dbReference type="CDD" id="cd03697">
    <property type="entry name" value="EFTU_II"/>
    <property type="match status" value="1"/>
</dbReference>
<dbReference type="CDD" id="cd03707">
    <property type="entry name" value="EFTU_III"/>
    <property type="match status" value="1"/>
</dbReference>
<dbReference type="FunFam" id="2.40.30.10:FF:000001">
    <property type="entry name" value="Elongation factor Tu"/>
    <property type="match status" value="1"/>
</dbReference>
<dbReference type="FunFam" id="3.40.50.300:FF:000003">
    <property type="entry name" value="Elongation factor Tu"/>
    <property type="match status" value="1"/>
</dbReference>
<dbReference type="Gene3D" id="3.40.50.300">
    <property type="entry name" value="P-loop containing nucleotide triphosphate hydrolases"/>
    <property type="match status" value="1"/>
</dbReference>
<dbReference type="Gene3D" id="2.40.30.10">
    <property type="entry name" value="Translation factors"/>
    <property type="match status" value="2"/>
</dbReference>
<dbReference type="HAMAP" id="MF_00118_B">
    <property type="entry name" value="EF_Tu_B"/>
    <property type="match status" value="1"/>
</dbReference>
<dbReference type="InterPro" id="IPR041709">
    <property type="entry name" value="EF-Tu_GTP-bd"/>
</dbReference>
<dbReference type="InterPro" id="IPR050055">
    <property type="entry name" value="EF-Tu_GTPase"/>
</dbReference>
<dbReference type="InterPro" id="IPR004161">
    <property type="entry name" value="EFTu-like_2"/>
</dbReference>
<dbReference type="InterPro" id="IPR033720">
    <property type="entry name" value="EFTU_2"/>
</dbReference>
<dbReference type="InterPro" id="IPR031157">
    <property type="entry name" value="G_TR_CS"/>
</dbReference>
<dbReference type="InterPro" id="IPR027417">
    <property type="entry name" value="P-loop_NTPase"/>
</dbReference>
<dbReference type="InterPro" id="IPR005225">
    <property type="entry name" value="Small_GTP-bd"/>
</dbReference>
<dbReference type="InterPro" id="IPR000795">
    <property type="entry name" value="T_Tr_GTP-bd_dom"/>
</dbReference>
<dbReference type="InterPro" id="IPR009000">
    <property type="entry name" value="Transl_B-barrel_sf"/>
</dbReference>
<dbReference type="InterPro" id="IPR009001">
    <property type="entry name" value="Transl_elong_EF1A/Init_IF2_C"/>
</dbReference>
<dbReference type="InterPro" id="IPR004541">
    <property type="entry name" value="Transl_elong_EFTu/EF1A_bac/org"/>
</dbReference>
<dbReference type="InterPro" id="IPR004160">
    <property type="entry name" value="Transl_elong_EFTu/EF1A_C"/>
</dbReference>
<dbReference type="NCBIfam" id="TIGR00485">
    <property type="entry name" value="EF-Tu"/>
    <property type="match status" value="1"/>
</dbReference>
<dbReference type="NCBIfam" id="NF000766">
    <property type="entry name" value="PRK00049.1"/>
    <property type="match status" value="1"/>
</dbReference>
<dbReference type="NCBIfam" id="NF009372">
    <property type="entry name" value="PRK12735.1"/>
    <property type="match status" value="1"/>
</dbReference>
<dbReference type="NCBIfam" id="NF009373">
    <property type="entry name" value="PRK12736.1"/>
    <property type="match status" value="1"/>
</dbReference>
<dbReference type="NCBIfam" id="TIGR00231">
    <property type="entry name" value="small_GTP"/>
    <property type="match status" value="1"/>
</dbReference>
<dbReference type="PANTHER" id="PTHR43721:SF22">
    <property type="entry name" value="ELONGATION FACTOR TU, MITOCHONDRIAL"/>
    <property type="match status" value="1"/>
</dbReference>
<dbReference type="PANTHER" id="PTHR43721">
    <property type="entry name" value="ELONGATION FACTOR TU-RELATED"/>
    <property type="match status" value="1"/>
</dbReference>
<dbReference type="Pfam" id="PF00009">
    <property type="entry name" value="GTP_EFTU"/>
    <property type="match status" value="1"/>
</dbReference>
<dbReference type="Pfam" id="PF03144">
    <property type="entry name" value="GTP_EFTU_D2"/>
    <property type="match status" value="1"/>
</dbReference>
<dbReference type="Pfam" id="PF03143">
    <property type="entry name" value="GTP_EFTU_D3"/>
    <property type="match status" value="1"/>
</dbReference>
<dbReference type="PRINTS" id="PR00315">
    <property type="entry name" value="ELONGATNFCT"/>
</dbReference>
<dbReference type="SUPFAM" id="SSF50465">
    <property type="entry name" value="EF-Tu/eEF-1alpha/eIF2-gamma C-terminal domain"/>
    <property type="match status" value="1"/>
</dbReference>
<dbReference type="SUPFAM" id="SSF52540">
    <property type="entry name" value="P-loop containing nucleoside triphosphate hydrolases"/>
    <property type="match status" value="1"/>
</dbReference>
<dbReference type="SUPFAM" id="SSF50447">
    <property type="entry name" value="Translation proteins"/>
    <property type="match status" value="1"/>
</dbReference>
<dbReference type="PROSITE" id="PS00301">
    <property type="entry name" value="G_TR_1"/>
    <property type="match status" value="1"/>
</dbReference>
<dbReference type="PROSITE" id="PS51722">
    <property type="entry name" value="G_TR_2"/>
    <property type="match status" value="1"/>
</dbReference>
<accession>Q8P1W4</accession>
<reference key="1">
    <citation type="journal article" date="2002" name="Proc. Natl. Acad. Sci. U.S.A.">
        <title>Genome sequence and comparative microarray analysis of serotype M18 group A Streptococcus strains associated with acute rheumatic fever outbreaks.</title>
        <authorList>
            <person name="Smoot J.C."/>
            <person name="Barbian K.D."/>
            <person name="Van Gompel J.J."/>
            <person name="Smoot L.M."/>
            <person name="Chaussee M.S."/>
            <person name="Sylva G.L."/>
            <person name="Sturdevant D.E."/>
            <person name="Ricklefs S.M."/>
            <person name="Porcella S.F."/>
            <person name="Parkins L.D."/>
            <person name="Beres S.B."/>
            <person name="Campbell D.S."/>
            <person name="Smith T.M."/>
            <person name="Zhang Q."/>
            <person name="Kapur V."/>
            <person name="Daly J.A."/>
            <person name="Veasy L.G."/>
            <person name="Musser J.M."/>
        </authorList>
    </citation>
    <scope>NUCLEOTIDE SEQUENCE [LARGE SCALE GENOMIC DNA]</scope>
    <source>
        <strain>MGAS8232</strain>
    </source>
</reference>
<organism>
    <name type="scientific">Streptococcus pyogenes serotype M18 (strain MGAS8232)</name>
    <dbReference type="NCBI Taxonomy" id="186103"/>
    <lineage>
        <taxon>Bacteria</taxon>
        <taxon>Bacillati</taxon>
        <taxon>Bacillota</taxon>
        <taxon>Bacilli</taxon>
        <taxon>Lactobacillales</taxon>
        <taxon>Streptococcaceae</taxon>
        <taxon>Streptococcus</taxon>
    </lineage>
</organism>
<proteinExistence type="inferred from homology"/>
<protein>
    <recommendedName>
        <fullName evidence="2">Elongation factor Tu</fullName>
        <shortName evidence="2">EF-Tu</shortName>
        <ecNumber evidence="2">3.6.5.3</ecNumber>
    </recommendedName>
</protein>
<name>EFTU_STRP8</name>
<feature type="chain" id="PRO_0000091412" description="Elongation factor Tu">
    <location>
        <begin position="1"/>
        <end position="398"/>
    </location>
</feature>
<feature type="domain" description="tr-type G">
    <location>
        <begin position="10"/>
        <end position="207"/>
    </location>
</feature>
<feature type="region of interest" description="G1" evidence="1">
    <location>
        <begin position="19"/>
        <end position="26"/>
    </location>
</feature>
<feature type="region of interest" description="G2" evidence="1">
    <location>
        <begin position="63"/>
        <end position="67"/>
    </location>
</feature>
<feature type="region of interest" description="G3" evidence="1">
    <location>
        <begin position="84"/>
        <end position="87"/>
    </location>
</feature>
<feature type="region of interest" description="G4" evidence="1">
    <location>
        <begin position="139"/>
        <end position="142"/>
    </location>
</feature>
<feature type="region of interest" description="G5" evidence="1">
    <location>
        <begin position="177"/>
        <end position="179"/>
    </location>
</feature>
<feature type="binding site" evidence="2">
    <location>
        <begin position="19"/>
        <end position="26"/>
    </location>
    <ligand>
        <name>GTP</name>
        <dbReference type="ChEBI" id="CHEBI:37565"/>
    </ligand>
</feature>
<feature type="binding site" evidence="2">
    <location>
        <position position="26"/>
    </location>
    <ligand>
        <name>Mg(2+)</name>
        <dbReference type="ChEBI" id="CHEBI:18420"/>
    </ligand>
</feature>
<feature type="binding site" evidence="2">
    <location>
        <begin position="84"/>
        <end position="88"/>
    </location>
    <ligand>
        <name>GTP</name>
        <dbReference type="ChEBI" id="CHEBI:37565"/>
    </ligand>
</feature>
<feature type="binding site" evidence="2">
    <location>
        <begin position="139"/>
        <end position="142"/>
    </location>
    <ligand>
        <name>GTP</name>
        <dbReference type="ChEBI" id="CHEBI:37565"/>
    </ligand>
</feature>
<keyword id="KW-0963">Cytoplasm</keyword>
<keyword id="KW-0251">Elongation factor</keyword>
<keyword id="KW-0342">GTP-binding</keyword>
<keyword id="KW-0378">Hydrolase</keyword>
<keyword id="KW-0460">Magnesium</keyword>
<keyword id="KW-0479">Metal-binding</keyword>
<keyword id="KW-0547">Nucleotide-binding</keyword>
<keyword id="KW-0648">Protein biosynthesis</keyword>
<evidence type="ECO:0000250" key="1"/>
<evidence type="ECO:0000255" key="2">
    <source>
        <dbReference type="HAMAP-Rule" id="MF_00118"/>
    </source>
</evidence>
<sequence>MAKEKYDRSKPHVNIGTIGHVDHGKTTLTAAITTVLARRLPTSVNQPKDYASIDAAPEERERGITINTAHVEYETETRHYAHIDAPGHADYVKNMITGAAQMDGAILVVASTDGPMPQTREHILLSRQVGVKHLIVFMNKVDLVDDEELLELVEMEIRDLLSEYDFPGDDLPVIQGSALKALEGDSKYEDIIMELMSTVDEYIPEPERDTDKPLLLPVEDVFSITGRGTVASGRIDRGTVRVNDEIEIVGIKEETKKAVVTGVEMFRKQLDEGLAGDNVGILLRGVQRDEIERGQVIAKPGSINPHTKFKGEVYILSKDEGGRHTPFFNNYRPQFYFRTTDVTGSIELPAGTEMVMPGDNVTINVELIHPIAVEQGTTFSIREGGRTVGSGIVSEIEA</sequence>